<reference key="1">
    <citation type="journal article" date="1988" name="J. Mol. Biol.">
        <title>Structure and organization of Marchantia polymorpha chloroplast genome. III. Gene organization of the large single copy region from rbcL to trnI(CAU).</title>
        <authorList>
            <person name="Fukuzawa H."/>
            <person name="Kohchi T."/>
            <person name="Sano T."/>
            <person name="Shirai H."/>
            <person name="Umesono K."/>
            <person name="Inokuchi H."/>
            <person name="Ozeki H."/>
            <person name="Ohyama K."/>
        </authorList>
    </citation>
    <scope>NUCLEOTIDE SEQUENCE [GENOMIC DNA]</scope>
</reference>
<reference key="2">
    <citation type="journal article" date="1986" name="Nature">
        <title>Chloroplast gene organization deduced from complete sequence of liverwort Marchantia polymorpha chloroplast DNA.</title>
        <authorList>
            <person name="Ohyama K."/>
            <person name="Fukuzawa H."/>
            <person name="Kohchi T."/>
            <person name="Shirai H."/>
            <person name="Sano T."/>
            <person name="Sano S."/>
            <person name="Umesono K."/>
            <person name="Shiki Y."/>
            <person name="Takeuchi M."/>
            <person name="Chang Z."/>
            <person name="Aota S."/>
            <person name="Inokuchi H."/>
            <person name="Ozeki H."/>
        </authorList>
    </citation>
    <scope>NUCLEOTIDE SEQUENCE [LARGE SCALE GENOMIC DNA]</scope>
</reference>
<dbReference type="EMBL" id="X04465">
    <property type="protein sequence ID" value="CAA28110.1"/>
    <property type="molecule type" value="Genomic_DNA"/>
</dbReference>
<dbReference type="PIR" id="A03472">
    <property type="entry name" value="QJLV6A"/>
</dbReference>
<dbReference type="RefSeq" id="NP_039324.1">
    <property type="nucleotide sequence ID" value="NC_001319.1"/>
</dbReference>
<dbReference type="RefSeq" id="YP_009646838.1">
    <property type="nucleotide sequence ID" value="NC_042505.1"/>
</dbReference>
<dbReference type="SMR" id="P06412"/>
<dbReference type="GeneID" id="2702561"/>
<dbReference type="GeneID" id="40386683"/>
<dbReference type="GO" id="GO:0009535">
    <property type="term" value="C:chloroplast thylakoid membrane"/>
    <property type="evidence" value="ECO:0007669"/>
    <property type="project" value="UniProtKB-SubCell"/>
</dbReference>
<dbReference type="GO" id="GO:0009523">
    <property type="term" value="C:photosystem II"/>
    <property type="evidence" value="ECO:0007669"/>
    <property type="project" value="UniProtKB-KW"/>
</dbReference>
<dbReference type="GO" id="GO:0016168">
    <property type="term" value="F:chlorophyll binding"/>
    <property type="evidence" value="ECO:0007669"/>
    <property type="project" value="UniProtKB-UniRule"/>
</dbReference>
<dbReference type="GO" id="GO:0045156">
    <property type="term" value="F:electron transporter, transferring electrons within the cyclic electron transport pathway of photosynthesis activity"/>
    <property type="evidence" value="ECO:0007669"/>
    <property type="project" value="InterPro"/>
</dbReference>
<dbReference type="GO" id="GO:0009772">
    <property type="term" value="P:photosynthetic electron transport in photosystem II"/>
    <property type="evidence" value="ECO:0007669"/>
    <property type="project" value="InterPro"/>
</dbReference>
<dbReference type="FunFam" id="3.10.680.10:FF:000001">
    <property type="entry name" value="Photosystem II CP47 reaction center protein"/>
    <property type="match status" value="1"/>
</dbReference>
<dbReference type="Gene3D" id="3.10.680.10">
    <property type="entry name" value="Photosystem II CP47 reaction center protein"/>
    <property type="match status" value="1"/>
</dbReference>
<dbReference type="HAMAP" id="MF_01495">
    <property type="entry name" value="PSII_PsbB_CP47"/>
    <property type="match status" value="1"/>
</dbReference>
<dbReference type="InterPro" id="IPR000932">
    <property type="entry name" value="PS_antenna-like"/>
</dbReference>
<dbReference type="InterPro" id="IPR036001">
    <property type="entry name" value="PS_II_antenna-like_sf"/>
</dbReference>
<dbReference type="InterPro" id="IPR017486">
    <property type="entry name" value="PSII_PsbB"/>
</dbReference>
<dbReference type="NCBIfam" id="TIGR03039">
    <property type="entry name" value="PS_II_CP47"/>
    <property type="match status" value="1"/>
</dbReference>
<dbReference type="PANTHER" id="PTHR33180">
    <property type="entry name" value="PHOTOSYSTEM II CP43 REACTION CENTER PROTEIN"/>
    <property type="match status" value="1"/>
</dbReference>
<dbReference type="PANTHER" id="PTHR33180:SF37">
    <property type="entry name" value="PHOTOSYSTEM II CP43 REACTION CENTER PROTEIN"/>
    <property type="match status" value="1"/>
</dbReference>
<dbReference type="Pfam" id="PF00421">
    <property type="entry name" value="PSII"/>
    <property type="match status" value="1"/>
</dbReference>
<dbReference type="SUPFAM" id="SSF161077">
    <property type="entry name" value="Photosystem II antenna protein-like"/>
    <property type="match status" value="1"/>
</dbReference>
<name>PSBB_MARPO</name>
<comment type="function">
    <text evidence="1">One of the components of the core complex of photosystem II (PSII). It binds chlorophyll and helps catalyze the primary light-induced photochemical processes of PSII. PSII is a light-driven water:plastoquinone oxidoreductase, using light energy to abstract electrons from H(2)O, generating O(2) and a proton gradient subsequently used for ATP formation.</text>
</comment>
<comment type="cofactor">
    <text evidence="1">Binds multiple chlorophylls. PSII binds additional chlorophylls, carotenoids and specific lipids.</text>
</comment>
<comment type="subunit">
    <text evidence="1">PSII is composed of 1 copy each of membrane proteins PsbA, PsbB, PsbC, PsbD, PsbE, PsbF, PsbH, PsbI, PsbJ, PsbK, PsbL, PsbM, PsbT, PsbX, PsbY, PsbZ, Psb30/Ycf12, at least 3 peripheral proteins of the oxygen-evolving complex and a large number of cofactors. It forms dimeric complexes.</text>
</comment>
<comment type="subcellular location">
    <subcellularLocation>
        <location evidence="1">Plastid</location>
        <location evidence="1">Chloroplast thylakoid membrane</location>
        <topology evidence="1">Multi-pass membrane protein</topology>
    </subcellularLocation>
</comment>
<comment type="similarity">
    <text evidence="1">Belongs to the PsbB/PsbC family. PsbB subfamily.</text>
</comment>
<sequence>MGLPWYRVHTVVLNDPGRLIAVHLMHTALVSGWAGSMALYELAVFDPSDPVLDPMWRQGMFVIPFMTRLGITKSWGGWSITGETVTNAGIWSYEGVAAVHIVLSGLLFLAAIWHWVYWDLELFRDERTGKPSLDLPKIFGIHLFLSGVLCFAFGAFHVTGLFGPGIWISDPYGLTGKVQPVAPAWGAEGFDPFVPGGIASHHIAAGILGILAGLFHLSVRPPQRLYKGLRMGNVETVLSSSIAAVFFAAFVVAGTMWYGSAATPIELFGPTRYQWDQGFFQQEIDRRIRSSKAENLSLSEAWSKIPEKLAFYDYIGNNPAKGGLFRAGAMDNGDGIAVGWLGHAVFKDKEGNELFVRRMPTFFETFPVVLVDEQGIVRADVPFRRAESKYSVEQVGVTVEFYGGELDGVSFSDPATVKKYARRAQLGEIFEFDRATLKSDGVFRSSPRGWFTFGHATFALLFFFGHIWHGARTLFRDVFAGIDPDLDAQVEFGAFQKLGDPTTKRQVI</sequence>
<organism>
    <name type="scientific">Marchantia polymorpha</name>
    <name type="common">Common liverwort</name>
    <name type="synonym">Marchantia aquatica</name>
    <dbReference type="NCBI Taxonomy" id="3197"/>
    <lineage>
        <taxon>Eukaryota</taxon>
        <taxon>Viridiplantae</taxon>
        <taxon>Streptophyta</taxon>
        <taxon>Embryophyta</taxon>
        <taxon>Marchantiophyta</taxon>
        <taxon>Marchantiopsida</taxon>
        <taxon>Marchantiidae</taxon>
        <taxon>Marchantiales</taxon>
        <taxon>Marchantiaceae</taxon>
        <taxon>Marchantia</taxon>
    </lineage>
</organism>
<feature type="chain" id="PRO_0000077486" description="Photosystem II CP47 reaction center protein">
    <location>
        <begin position="1"/>
        <end position="508"/>
    </location>
</feature>
<feature type="transmembrane region" description="Helical" evidence="1">
    <location>
        <begin position="21"/>
        <end position="36"/>
    </location>
</feature>
<feature type="transmembrane region" description="Helical" evidence="1">
    <location>
        <begin position="101"/>
        <end position="115"/>
    </location>
</feature>
<feature type="transmembrane region" description="Helical" evidence="1">
    <location>
        <begin position="140"/>
        <end position="156"/>
    </location>
</feature>
<feature type="transmembrane region" description="Helical" evidence="1">
    <location>
        <begin position="203"/>
        <end position="218"/>
    </location>
</feature>
<feature type="transmembrane region" description="Helical" evidence="1">
    <location>
        <begin position="237"/>
        <end position="252"/>
    </location>
</feature>
<feature type="transmembrane region" description="Helical" evidence="1">
    <location>
        <begin position="457"/>
        <end position="472"/>
    </location>
</feature>
<accession>P06412</accession>
<gene>
    <name evidence="1" type="primary">psbB</name>
</gene>
<protein>
    <recommendedName>
        <fullName evidence="1">Photosystem II CP47 reaction center protein</fullName>
    </recommendedName>
    <alternativeName>
        <fullName evidence="1">PSII 47 kDa protein</fullName>
    </alternativeName>
    <alternativeName>
        <fullName evidence="1">Protein CP-47</fullName>
    </alternativeName>
</protein>
<proteinExistence type="inferred from homology"/>
<geneLocation type="chloroplast"/>
<keyword id="KW-0148">Chlorophyll</keyword>
<keyword id="KW-0150">Chloroplast</keyword>
<keyword id="KW-0157">Chromophore</keyword>
<keyword id="KW-0472">Membrane</keyword>
<keyword id="KW-0602">Photosynthesis</keyword>
<keyword id="KW-0604">Photosystem II</keyword>
<keyword id="KW-0934">Plastid</keyword>
<keyword id="KW-0793">Thylakoid</keyword>
<keyword id="KW-0812">Transmembrane</keyword>
<keyword id="KW-1133">Transmembrane helix</keyword>
<evidence type="ECO:0000255" key="1">
    <source>
        <dbReference type="HAMAP-Rule" id="MF_01495"/>
    </source>
</evidence>